<protein>
    <recommendedName>
        <fullName evidence="1">Molybdenum cofactor guanylyltransferase</fullName>
        <shortName evidence="1">MoCo guanylyltransferase</shortName>
        <ecNumber evidence="1">2.7.7.77</ecNumber>
    </recommendedName>
    <alternativeName>
        <fullName evidence="1">GTP:molybdopterin guanylyltransferase</fullName>
    </alternativeName>
    <alternativeName>
        <fullName evidence="1">Mo-MPT guanylyltransferase</fullName>
    </alternativeName>
    <alternativeName>
        <fullName evidence="1">Molybdopterin guanylyltransferase</fullName>
    </alternativeName>
    <alternativeName>
        <fullName evidence="1">Molybdopterin-guanine dinucleotide synthase</fullName>
        <shortName evidence="1">MGD synthase</shortName>
    </alternativeName>
</protein>
<evidence type="ECO:0000255" key="1">
    <source>
        <dbReference type="HAMAP-Rule" id="MF_00316"/>
    </source>
</evidence>
<accession>Q8FBH7</accession>
<dbReference type="EC" id="2.7.7.77" evidence="1"/>
<dbReference type="EMBL" id="AE014075">
    <property type="protein sequence ID" value="AAN83232.1"/>
    <property type="molecule type" value="Genomic_DNA"/>
</dbReference>
<dbReference type="RefSeq" id="WP_001052151.1">
    <property type="nucleotide sequence ID" value="NZ_CP051263.1"/>
</dbReference>
<dbReference type="SMR" id="Q8FBH7"/>
<dbReference type="STRING" id="199310.c4801"/>
<dbReference type="KEGG" id="ecc:c4801"/>
<dbReference type="eggNOG" id="COG0746">
    <property type="taxonomic scope" value="Bacteria"/>
</dbReference>
<dbReference type="HOGENOM" id="CLU_055597_5_1_6"/>
<dbReference type="BioCyc" id="ECOL199310:C4801-MONOMER"/>
<dbReference type="Proteomes" id="UP000001410">
    <property type="component" value="Chromosome"/>
</dbReference>
<dbReference type="GO" id="GO:0005737">
    <property type="term" value="C:cytoplasm"/>
    <property type="evidence" value="ECO:0007669"/>
    <property type="project" value="UniProtKB-SubCell"/>
</dbReference>
<dbReference type="GO" id="GO:0005525">
    <property type="term" value="F:GTP binding"/>
    <property type="evidence" value="ECO:0007669"/>
    <property type="project" value="UniProtKB-UniRule"/>
</dbReference>
<dbReference type="GO" id="GO:0046872">
    <property type="term" value="F:metal ion binding"/>
    <property type="evidence" value="ECO:0007669"/>
    <property type="project" value="UniProtKB-KW"/>
</dbReference>
<dbReference type="GO" id="GO:0061603">
    <property type="term" value="F:molybdenum cofactor guanylyltransferase activity"/>
    <property type="evidence" value="ECO:0007669"/>
    <property type="project" value="UniProtKB-EC"/>
</dbReference>
<dbReference type="GO" id="GO:1902758">
    <property type="term" value="P:bis(molybdopterin guanine dinucleotide)molybdenum biosynthetic process"/>
    <property type="evidence" value="ECO:0007669"/>
    <property type="project" value="TreeGrafter"/>
</dbReference>
<dbReference type="CDD" id="cd02503">
    <property type="entry name" value="MobA"/>
    <property type="match status" value="1"/>
</dbReference>
<dbReference type="FunFam" id="3.90.550.10:FF:000118">
    <property type="entry name" value="Molybdenum cofactor guanylyltransferase"/>
    <property type="match status" value="1"/>
</dbReference>
<dbReference type="Gene3D" id="3.90.550.10">
    <property type="entry name" value="Spore Coat Polysaccharide Biosynthesis Protein SpsA, Chain A"/>
    <property type="match status" value="1"/>
</dbReference>
<dbReference type="HAMAP" id="MF_00316">
    <property type="entry name" value="MobA"/>
    <property type="match status" value="1"/>
</dbReference>
<dbReference type="InterPro" id="IPR025877">
    <property type="entry name" value="MobA-like_NTP_Trfase"/>
</dbReference>
<dbReference type="InterPro" id="IPR013482">
    <property type="entry name" value="Molybde_CF_guanTrfase"/>
</dbReference>
<dbReference type="InterPro" id="IPR029044">
    <property type="entry name" value="Nucleotide-diphossugar_trans"/>
</dbReference>
<dbReference type="NCBIfam" id="TIGR02665">
    <property type="entry name" value="molyb_mobA"/>
    <property type="match status" value="1"/>
</dbReference>
<dbReference type="PANTHER" id="PTHR19136">
    <property type="entry name" value="MOLYBDENUM COFACTOR GUANYLYLTRANSFERASE"/>
    <property type="match status" value="1"/>
</dbReference>
<dbReference type="PANTHER" id="PTHR19136:SF81">
    <property type="entry name" value="MOLYBDENUM COFACTOR GUANYLYLTRANSFERASE"/>
    <property type="match status" value="1"/>
</dbReference>
<dbReference type="Pfam" id="PF12804">
    <property type="entry name" value="NTP_transf_3"/>
    <property type="match status" value="1"/>
</dbReference>
<dbReference type="SUPFAM" id="SSF53448">
    <property type="entry name" value="Nucleotide-diphospho-sugar transferases"/>
    <property type="match status" value="1"/>
</dbReference>
<reference key="1">
    <citation type="journal article" date="2002" name="Proc. Natl. Acad. Sci. U.S.A.">
        <title>Extensive mosaic structure revealed by the complete genome sequence of uropathogenic Escherichia coli.</title>
        <authorList>
            <person name="Welch R.A."/>
            <person name="Burland V."/>
            <person name="Plunkett G. III"/>
            <person name="Redford P."/>
            <person name="Roesch P."/>
            <person name="Rasko D."/>
            <person name="Buckles E.L."/>
            <person name="Liou S.-R."/>
            <person name="Boutin A."/>
            <person name="Hackett J."/>
            <person name="Stroud D."/>
            <person name="Mayhew G.F."/>
            <person name="Rose D.J."/>
            <person name="Zhou S."/>
            <person name="Schwartz D.C."/>
            <person name="Perna N.T."/>
            <person name="Mobley H.L.T."/>
            <person name="Donnenberg M.S."/>
            <person name="Blattner F.R."/>
        </authorList>
    </citation>
    <scope>NUCLEOTIDE SEQUENCE [LARGE SCALE GENOMIC DNA]</scope>
    <source>
        <strain>CFT073 / ATCC 700928 / UPEC</strain>
    </source>
</reference>
<proteinExistence type="inferred from homology"/>
<sequence>MNLMTMITGVVLAGGKARRMGGVDKGLLELNGKPLWQYVADALMTQLSHVVVNANRHQEIYQVSGLKVIEDSLADYPGPLAGMLSVMQQEAGEWFLFCPCDTPYIPHDLAARLTHQRKDAPVVWVHDGERDHPTIALVNRAIEPLLLEYLQAGERRVMAFMRLAGGHAVDFSDRKEAFINVNTPEELARWQEKR</sequence>
<name>MOBA_ECOL6</name>
<feature type="chain" id="PRO_0000134888" description="Molybdenum cofactor guanylyltransferase">
    <location>
        <begin position="1"/>
        <end position="194"/>
    </location>
</feature>
<feature type="binding site" evidence="1">
    <location>
        <begin position="12"/>
        <end position="14"/>
    </location>
    <ligand>
        <name>GTP</name>
        <dbReference type="ChEBI" id="CHEBI:37565"/>
    </ligand>
</feature>
<feature type="binding site" evidence="1">
    <location>
        <position position="25"/>
    </location>
    <ligand>
        <name>GTP</name>
        <dbReference type="ChEBI" id="CHEBI:37565"/>
    </ligand>
</feature>
<feature type="binding site" evidence="1">
    <location>
        <position position="53"/>
    </location>
    <ligand>
        <name>GTP</name>
        <dbReference type="ChEBI" id="CHEBI:37565"/>
    </ligand>
</feature>
<feature type="binding site" evidence="1">
    <location>
        <position position="71"/>
    </location>
    <ligand>
        <name>GTP</name>
        <dbReference type="ChEBI" id="CHEBI:37565"/>
    </ligand>
</feature>
<feature type="binding site" evidence="1">
    <location>
        <position position="101"/>
    </location>
    <ligand>
        <name>GTP</name>
        <dbReference type="ChEBI" id="CHEBI:37565"/>
    </ligand>
</feature>
<feature type="binding site" evidence="1">
    <location>
        <position position="101"/>
    </location>
    <ligand>
        <name>Mg(2+)</name>
        <dbReference type="ChEBI" id="CHEBI:18420"/>
    </ligand>
</feature>
<organism>
    <name type="scientific">Escherichia coli O6:H1 (strain CFT073 / ATCC 700928 / UPEC)</name>
    <dbReference type="NCBI Taxonomy" id="199310"/>
    <lineage>
        <taxon>Bacteria</taxon>
        <taxon>Pseudomonadati</taxon>
        <taxon>Pseudomonadota</taxon>
        <taxon>Gammaproteobacteria</taxon>
        <taxon>Enterobacterales</taxon>
        <taxon>Enterobacteriaceae</taxon>
        <taxon>Escherichia</taxon>
    </lineage>
</organism>
<comment type="function">
    <text evidence="1">Transfers a GMP moiety from GTP to Mo-molybdopterin (Mo-MPT) cofactor (Moco or molybdenum cofactor) to form Mo-molybdopterin guanine dinucleotide (Mo-MGD) cofactor.</text>
</comment>
<comment type="catalytic activity">
    <reaction evidence="1">
        <text>Mo-molybdopterin + GTP + H(+) = Mo-molybdopterin guanine dinucleotide + diphosphate</text>
        <dbReference type="Rhea" id="RHEA:34243"/>
        <dbReference type="ChEBI" id="CHEBI:15378"/>
        <dbReference type="ChEBI" id="CHEBI:33019"/>
        <dbReference type="ChEBI" id="CHEBI:37565"/>
        <dbReference type="ChEBI" id="CHEBI:71302"/>
        <dbReference type="ChEBI" id="CHEBI:71310"/>
        <dbReference type="EC" id="2.7.7.77"/>
    </reaction>
</comment>
<comment type="cofactor">
    <cofactor evidence="1">
        <name>Mg(2+)</name>
        <dbReference type="ChEBI" id="CHEBI:18420"/>
    </cofactor>
</comment>
<comment type="subunit">
    <text evidence="1">Monomer.</text>
</comment>
<comment type="subcellular location">
    <subcellularLocation>
        <location evidence="1">Cytoplasm</location>
    </subcellularLocation>
</comment>
<comment type="domain">
    <text evidence="1">The N-terminal domain determines nucleotide recognition and specific binding, while the C-terminal domain determines the specific binding to the target protein.</text>
</comment>
<comment type="similarity">
    <text evidence="1">Belongs to the MobA family.</text>
</comment>
<gene>
    <name evidence="1" type="primary">mobA</name>
    <name type="ordered locus">c4801</name>
</gene>
<keyword id="KW-0963">Cytoplasm</keyword>
<keyword id="KW-0342">GTP-binding</keyword>
<keyword id="KW-0460">Magnesium</keyword>
<keyword id="KW-0479">Metal-binding</keyword>
<keyword id="KW-0501">Molybdenum cofactor biosynthesis</keyword>
<keyword id="KW-0547">Nucleotide-binding</keyword>
<keyword id="KW-1185">Reference proteome</keyword>
<keyword id="KW-0808">Transferase</keyword>